<organism>
    <name type="scientific">Escherichia coli (strain K12)</name>
    <dbReference type="NCBI Taxonomy" id="83333"/>
    <lineage>
        <taxon>Bacteria</taxon>
        <taxon>Pseudomonadati</taxon>
        <taxon>Pseudomonadota</taxon>
        <taxon>Gammaproteobacteria</taxon>
        <taxon>Enterobacterales</taxon>
        <taxon>Enterobacteriaceae</taxon>
        <taxon>Escherichia</taxon>
    </lineage>
</organism>
<protein>
    <recommendedName>
        <fullName>Protein YhfA</fullName>
    </recommendedName>
</protein>
<evidence type="ECO:0000305" key="1"/>
<evidence type="ECO:0007829" key="2">
    <source>
        <dbReference type="PDB" id="1ML8"/>
    </source>
</evidence>
<accession>P0ADX1</accession>
<accession>P24246</accession>
<accession>Q2M722</accession>
<sequence length="134" mass="14517">MQARVKWVEGLTFLGESASGHQILMDGNSGDKAPSPMEMVLMAAGGCSAIDVVSILQKGRQDVVDCEVKLTSERREEAPRLFTHINLHFIVTGRDLKDAAVARAVDLSAEKYCSVALMLEKAVNITHSYEVVAA</sequence>
<reference key="1">
    <citation type="journal article" date="1991" name="Biochim. Biophys. Acta">
        <title>The nucleotide sequence of the Escherichia coli crp divergent RNA and an overlapping ORF.</title>
        <authorList>
            <person name="Bhasin R."/>
            <person name="Freundlich M."/>
        </authorList>
    </citation>
    <scope>NUCLEOTIDE SEQUENCE [GENOMIC DNA]</scope>
    <source>
        <strain>K12</strain>
    </source>
</reference>
<reference key="2">
    <citation type="journal article" date="1997" name="Science">
        <title>The complete genome sequence of Escherichia coli K-12.</title>
        <authorList>
            <person name="Blattner F.R."/>
            <person name="Plunkett G. III"/>
            <person name="Bloch C.A."/>
            <person name="Perna N.T."/>
            <person name="Burland V."/>
            <person name="Riley M."/>
            <person name="Collado-Vides J."/>
            <person name="Glasner J.D."/>
            <person name="Rode C.K."/>
            <person name="Mayhew G.F."/>
            <person name="Gregor J."/>
            <person name="Davis N.W."/>
            <person name="Kirkpatrick H.A."/>
            <person name="Goeden M.A."/>
            <person name="Rose D.J."/>
            <person name="Mau B."/>
            <person name="Shao Y."/>
        </authorList>
    </citation>
    <scope>NUCLEOTIDE SEQUENCE [LARGE SCALE GENOMIC DNA]</scope>
    <source>
        <strain>K12 / MG1655 / ATCC 47076</strain>
    </source>
</reference>
<reference key="3">
    <citation type="journal article" date="2006" name="Mol. Syst. Biol.">
        <title>Highly accurate genome sequences of Escherichia coli K-12 strains MG1655 and W3110.</title>
        <authorList>
            <person name="Hayashi K."/>
            <person name="Morooka N."/>
            <person name="Yamamoto Y."/>
            <person name="Fujita K."/>
            <person name="Isono K."/>
            <person name="Choi S."/>
            <person name="Ohtsubo E."/>
            <person name="Baba T."/>
            <person name="Wanner B.L."/>
            <person name="Mori H."/>
            <person name="Horiuchi T."/>
        </authorList>
    </citation>
    <scope>NUCLEOTIDE SEQUENCE [LARGE SCALE GENOMIC DNA]</scope>
    <source>
        <strain>K12 / W3110 / ATCC 27325 / DSM 5911</strain>
    </source>
</reference>
<reference key="4">
    <citation type="submission" date="2005-01" db="PDB data bank">
        <authorList>
            <consortium name="Midwest center for structural genomics (MCSG)"/>
        </authorList>
    </citation>
    <scope>X-RAY CRYSTALLOGRAPHY (2.6 ANGSTROMS)</scope>
</reference>
<name>YHFA_ECOLI</name>
<proteinExistence type="evidence at protein level"/>
<feature type="chain" id="PRO_0000169516" description="Protein YhfA">
    <location>
        <begin position="1"/>
        <end position="134"/>
    </location>
</feature>
<feature type="sequence conflict" description="In Ref. 1; CAA43921." evidence="1" ref="1">
    <original>EAP</original>
    <variation>ADT</variation>
    <location>
        <begin position="77"/>
        <end position="79"/>
    </location>
</feature>
<feature type="strand" evidence="2">
    <location>
        <begin position="4"/>
        <end position="9"/>
    </location>
</feature>
<feature type="strand" evidence="2">
    <location>
        <begin position="12"/>
        <end position="16"/>
    </location>
</feature>
<feature type="strand" evidence="2">
    <location>
        <begin position="22"/>
        <end position="26"/>
    </location>
</feature>
<feature type="turn" evidence="2">
    <location>
        <begin position="27"/>
        <end position="30"/>
    </location>
</feature>
<feature type="strand" evidence="2">
    <location>
        <begin position="31"/>
        <end position="33"/>
    </location>
</feature>
<feature type="helix" evidence="2">
    <location>
        <begin position="36"/>
        <end position="58"/>
    </location>
</feature>
<feature type="strand" evidence="2">
    <location>
        <begin position="63"/>
        <end position="74"/>
    </location>
</feature>
<feature type="strand" evidence="2">
    <location>
        <begin position="82"/>
        <end position="95"/>
    </location>
</feature>
<feature type="helix" evidence="2">
    <location>
        <begin position="98"/>
        <end position="110"/>
    </location>
</feature>
<feature type="helix" evidence="2">
    <location>
        <begin position="114"/>
        <end position="119"/>
    </location>
</feature>
<feature type="turn" evidence="2">
    <location>
        <begin position="120"/>
        <end position="122"/>
    </location>
</feature>
<feature type="strand" evidence="2">
    <location>
        <begin position="123"/>
        <end position="133"/>
    </location>
</feature>
<keyword id="KW-0002">3D-structure</keyword>
<keyword id="KW-1185">Reference proteome</keyword>
<dbReference type="EMBL" id="X61919">
    <property type="protein sequence ID" value="CAA43921.1"/>
    <property type="molecule type" value="Genomic_DNA"/>
</dbReference>
<dbReference type="EMBL" id="U18997">
    <property type="protein sequence ID" value="AAA58153.1"/>
    <property type="molecule type" value="Genomic_DNA"/>
</dbReference>
<dbReference type="EMBL" id="U00096">
    <property type="protein sequence ID" value="AAC76381.1"/>
    <property type="molecule type" value="Genomic_DNA"/>
</dbReference>
<dbReference type="EMBL" id="AP009048">
    <property type="protein sequence ID" value="BAE77934.1"/>
    <property type="molecule type" value="Genomic_DNA"/>
</dbReference>
<dbReference type="PIR" id="G65129">
    <property type="entry name" value="G65129"/>
</dbReference>
<dbReference type="RefSeq" id="NP_417815.1">
    <property type="nucleotide sequence ID" value="NC_000913.3"/>
</dbReference>
<dbReference type="RefSeq" id="WP_001148908.1">
    <property type="nucleotide sequence ID" value="NZ_STEB01000004.1"/>
</dbReference>
<dbReference type="PDB" id="1ML8">
    <property type="method" value="X-ray"/>
    <property type="resolution" value="2.60 A"/>
    <property type="chains" value="A=1-134"/>
</dbReference>
<dbReference type="PDBsum" id="1ML8"/>
<dbReference type="SMR" id="P0ADX1"/>
<dbReference type="BioGRID" id="4262926">
    <property type="interactions" value="17"/>
</dbReference>
<dbReference type="DIP" id="DIP-48201N"/>
<dbReference type="FunCoup" id="P0ADX1">
    <property type="interactions" value="84"/>
</dbReference>
<dbReference type="STRING" id="511145.b3356"/>
<dbReference type="jPOST" id="P0ADX1"/>
<dbReference type="PaxDb" id="511145-b3356"/>
<dbReference type="EnsemblBacteria" id="AAC76381">
    <property type="protein sequence ID" value="AAC76381"/>
    <property type="gene ID" value="b3356"/>
</dbReference>
<dbReference type="GeneID" id="947860"/>
<dbReference type="KEGG" id="ecj:JW3319"/>
<dbReference type="KEGG" id="eco:b3356"/>
<dbReference type="KEGG" id="ecoc:C3026_18225"/>
<dbReference type="PATRIC" id="fig|511145.12.peg.3450"/>
<dbReference type="EchoBASE" id="EB1169"/>
<dbReference type="eggNOG" id="COG1765">
    <property type="taxonomic scope" value="Bacteria"/>
</dbReference>
<dbReference type="HOGENOM" id="CLU_114057_1_2_6"/>
<dbReference type="InParanoid" id="P0ADX1"/>
<dbReference type="OMA" id="IHMHFVV"/>
<dbReference type="OrthoDB" id="9804010at2"/>
<dbReference type="PhylomeDB" id="P0ADX1"/>
<dbReference type="BioCyc" id="EcoCyc:EG11182-MONOMER"/>
<dbReference type="EvolutionaryTrace" id="P0ADX1"/>
<dbReference type="PRO" id="PR:P0ADX1"/>
<dbReference type="Proteomes" id="UP000000625">
    <property type="component" value="Chromosome"/>
</dbReference>
<dbReference type="Gene3D" id="2.20.25.10">
    <property type="match status" value="1"/>
</dbReference>
<dbReference type="Gene3D" id="3.30.300.20">
    <property type="match status" value="1"/>
</dbReference>
<dbReference type="InterPro" id="IPR015946">
    <property type="entry name" value="KH_dom-like_a/b"/>
</dbReference>
<dbReference type="InterPro" id="IPR003718">
    <property type="entry name" value="OsmC/Ohr_fam"/>
</dbReference>
<dbReference type="InterPro" id="IPR036102">
    <property type="entry name" value="OsmC/Ohrsf"/>
</dbReference>
<dbReference type="NCBIfam" id="NF008009">
    <property type="entry name" value="PRK10738.1"/>
    <property type="match status" value="1"/>
</dbReference>
<dbReference type="PANTHER" id="PTHR34352">
    <property type="entry name" value="PROTEIN YHFA"/>
    <property type="match status" value="1"/>
</dbReference>
<dbReference type="PANTHER" id="PTHR34352:SF1">
    <property type="entry name" value="PROTEIN YHFA"/>
    <property type="match status" value="1"/>
</dbReference>
<dbReference type="Pfam" id="PF02566">
    <property type="entry name" value="OsmC"/>
    <property type="match status" value="1"/>
</dbReference>
<dbReference type="SUPFAM" id="SSF82784">
    <property type="entry name" value="OsmC-like"/>
    <property type="match status" value="1"/>
</dbReference>
<gene>
    <name type="primary">yhfA</name>
    <name type="ordered locus">b3356</name>
    <name type="ordered locus">JW3319</name>
</gene>